<organism>
    <name type="scientific">Escherichia coli</name>
    <dbReference type="NCBI Taxonomy" id="562"/>
    <lineage>
        <taxon>Bacteria</taxon>
        <taxon>Pseudomonadati</taxon>
        <taxon>Pseudomonadota</taxon>
        <taxon>Gammaproteobacteria</taxon>
        <taxon>Enterobacterales</taxon>
        <taxon>Enterobacteriaceae</taxon>
        <taxon>Escherichia</taxon>
    </lineage>
</organism>
<gene>
    <name type="primary">kfoC</name>
</gene>
<dbReference type="EC" id="2.4.1.175" evidence="1"/>
<dbReference type="EC" id="2.4.1.226" evidence="1"/>
<dbReference type="EMBL" id="AB079602">
    <property type="protein sequence ID" value="BAC00523.1"/>
    <property type="molecule type" value="Genomic_DNA"/>
</dbReference>
<dbReference type="RefSeq" id="WP_000025667.1">
    <property type="nucleotide sequence ID" value="NZ_WSWP01000006.1"/>
</dbReference>
<dbReference type="PDB" id="2Z86">
    <property type="method" value="X-ray"/>
    <property type="resolution" value="2.40 A"/>
    <property type="chains" value="A/B/C/D=58-682"/>
</dbReference>
<dbReference type="PDB" id="2Z87">
    <property type="method" value="X-ray"/>
    <property type="resolution" value="3.00 A"/>
    <property type="chains" value="A/B=59-682"/>
</dbReference>
<dbReference type="PDBsum" id="2Z86"/>
<dbReference type="PDBsum" id="2Z87"/>
<dbReference type="SMR" id="Q8L0V4"/>
<dbReference type="CAZy" id="GT2">
    <property type="family name" value="Glycosyltransferase Family 2"/>
</dbReference>
<dbReference type="KEGG" id="ag:BAC00523"/>
<dbReference type="BRENDA" id="2.4.1.175">
    <property type="organism ID" value="2026"/>
</dbReference>
<dbReference type="EvolutionaryTrace" id="Q8L0V4"/>
<dbReference type="GO" id="GO:0047238">
    <property type="term" value="F:glucuronosyl-N-acetylgalactosaminyl-proteoglycan 4-beta-N-acetylgalactosaminyltransferase activity"/>
    <property type="evidence" value="ECO:0007669"/>
    <property type="project" value="UniProtKB-EC"/>
</dbReference>
<dbReference type="GO" id="GO:0046872">
    <property type="term" value="F:metal ion binding"/>
    <property type="evidence" value="ECO:0007669"/>
    <property type="project" value="UniProtKB-KW"/>
</dbReference>
<dbReference type="GO" id="GO:0050510">
    <property type="term" value="F:N-acetylgalactosaminyl-proteoglycan 3-beta-glucuronosyltransferase activity"/>
    <property type="evidence" value="ECO:0007669"/>
    <property type="project" value="UniProtKB-EC"/>
</dbReference>
<dbReference type="CDD" id="cd06420">
    <property type="entry name" value="GT2_Chondriotin_Pol_N"/>
    <property type="match status" value="1"/>
</dbReference>
<dbReference type="Gene3D" id="3.90.550.10">
    <property type="entry name" value="Spore Coat Polysaccharide Biosynthesis Protein SpsA, Chain A"/>
    <property type="match status" value="2"/>
</dbReference>
<dbReference type="InterPro" id="IPR027791">
    <property type="entry name" value="Galactosyl_T_C"/>
</dbReference>
<dbReference type="InterPro" id="IPR001173">
    <property type="entry name" value="Glyco_trans_2-like"/>
</dbReference>
<dbReference type="InterPro" id="IPR050834">
    <property type="entry name" value="Glycosyltransf_2"/>
</dbReference>
<dbReference type="InterPro" id="IPR029044">
    <property type="entry name" value="Nucleotide-diphossugar_trans"/>
</dbReference>
<dbReference type="PANTHER" id="PTHR43685">
    <property type="entry name" value="GLYCOSYLTRANSFERASE"/>
    <property type="match status" value="1"/>
</dbReference>
<dbReference type="PANTHER" id="PTHR43685:SF2">
    <property type="entry name" value="GLYCOSYLTRANSFERASE 2-LIKE DOMAIN-CONTAINING PROTEIN"/>
    <property type="match status" value="1"/>
</dbReference>
<dbReference type="Pfam" id="PF02709">
    <property type="entry name" value="Glyco_transf_7C"/>
    <property type="match status" value="1"/>
</dbReference>
<dbReference type="Pfam" id="PF00535">
    <property type="entry name" value="Glycos_transf_2"/>
    <property type="match status" value="2"/>
</dbReference>
<dbReference type="SUPFAM" id="SSF53448">
    <property type="entry name" value="Nucleotide-diphospho-sugar transferases"/>
    <property type="match status" value="2"/>
</dbReference>
<keyword id="KW-0002">3D-structure</keyword>
<keyword id="KW-0328">Glycosyltransferase</keyword>
<keyword id="KW-0464">Manganese</keyword>
<keyword id="KW-0479">Metal-binding</keyword>
<keyword id="KW-0511">Multifunctional enzyme</keyword>
<keyword id="KW-0677">Repeat</keyword>
<keyword id="KW-0808">Transferase</keyword>
<feature type="chain" id="PRO_0000059257" description="Chondroitin synthase">
    <location>
        <begin position="1"/>
        <end position="686"/>
    </location>
</feature>
<feature type="region of interest" description="Galactosaminyltransferase; A1 domain" evidence="2">
    <location>
        <begin position="130"/>
        <end position="417"/>
    </location>
</feature>
<feature type="region of interest" description="Glucuronosyltransferase; A2 domain" evidence="2">
    <location>
        <begin position="418"/>
        <end position="682"/>
    </location>
</feature>
<feature type="binding site" evidence="2">
    <location>
        <position position="157"/>
    </location>
    <ligand>
        <name>UDP-N-acetyl-alpha-D-galactosamine</name>
        <dbReference type="ChEBI" id="CHEBI:67138"/>
    </ligand>
</feature>
<feature type="binding site" evidence="2">
    <location>
        <position position="161"/>
    </location>
    <ligand>
        <name>UDP-N-acetyl-alpha-D-galactosamine</name>
        <dbReference type="ChEBI" id="CHEBI:67138"/>
    </ligand>
</feature>
<feature type="binding site" evidence="2">
    <location>
        <position position="188"/>
    </location>
    <ligand>
        <name>UDP-N-acetyl-alpha-D-galactosamine</name>
        <dbReference type="ChEBI" id="CHEBI:67138"/>
    </ligand>
</feature>
<feature type="binding site" evidence="2">
    <location>
        <position position="217"/>
    </location>
    <ligand>
        <name>UDP-N-acetyl-alpha-D-galactosamine</name>
        <dbReference type="ChEBI" id="CHEBI:67138"/>
    </ligand>
</feature>
<feature type="binding site" evidence="2">
    <location>
        <position position="223"/>
    </location>
    <ligand>
        <name>UDP-N-acetyl-alpha-D-galactosamine</name>
        <dbReference type="ChEBI" id="CHEBI:67138"/>
    </ligand>
</feature>
<feature type="binding site" evidence="2">
    <location>
        <begin position="239"/>
        <end position="240"/>
    </location>
    <ligand>
        <name>UDP-N-acetyl-alpha-D-galactosamine</name>
        <dbReference type="ChEBI" id="CHEBI:67138"/>
    </ligand>
</feature>
<feature type="binding site" evidence="2">
    <location>
        <position position="241"/>
    </location>
    <ligand>
        <name>Mn(2+)</name>
        <dbReference type="ChEBI" id="CHEBI:29035"/>
        <label>1</label>
    </ligand>
</feature>
<feature type="binding site" evidence="2">
    <location>
        <begin position="361"/>
        <end position="362"/>
    </location>
    <ligand>
        <name>UDP-N-acetyl-alpha-D-galactosamine</name>
        <dbReference type="ChEBI" id="CHEBI:67138"/>
    </ligand>
</feature>
<feature type="binding site" evidence="2">
    <location>
        <position position="386"/>
    </location>
    <ligand>
        <name>Mn(2+)</name>
        <dbReference type="ChEBI" id="CHEBI:29035"/>
        <label>1</label>
    </ligand>
</feature>
<feature type="binding site" evidence="2">
    <location>
        <position position="441"/>
    </location>
    <ligand>
        <name>UDP-alpha-D-glucuronate</name>
        <dbReference type="ChEBI" id="CHEBI:58052"/>
    </ligand>
</feature>
<feature type="binding site" evidence="2">
    <location>
        <position position="469"/>
    </location>
    <ligand>
        <name>UDP-alpha-D-glucuronate</name>
        <dbReference type="ChEBI" id="CHEBI:58052"/>
    </ligand>
</feature>
<feature type="binding site" evidence="2">
    <location>
        <begin position="517"/>
        <end position="520"/>
    </location>
    <ligand>
        <name>UDP-alpha-D-glucuronate</name>
        <dbReference type="ChEBI" id="CHEBI:58052"/>
    </ligand>
</feature>
<feature type="binding site" evidence="2">
    <location>
        <position position="521"/>
    </location>
    <ligand>
        <name>Mn(2+)</name>
        <dbReference type="ChEBI" id="CHEBI:29035"/>
        <label>2</label>
    </ligand>
</feature>
<feature type="binding site" evidence="2">
    <location>
        <position position="581"/>
    </location>
    <ligand>
        <name>UDP-alpha-D-glucuronate</name>
        <dbReference type="ChEBI" id="CHEBI:58052"/>
    </ligand>
</feature>
<feature type="binding site" evidence="2">
    <location>
        <begin position="603"/>
        <end position="604"/>
    </location>
    <ligand>
        <name>UDP-alpha-D-glucuronate</name>
        <dbReference type="ChEBI" id="CHEBI:58052"/>
    </ligand>
</feature>
<feature type="binding site" evidence="2">
    <location>
        <position position="631"/>
    </location>
    <ligand>
        <name>Mn(2+)</name>
        <dbReference type="ChEBI" id="CHEBI:29035"/>
        <label>2</label>
    </ligand>
</feature>
<feature type="helix" evidence="4">
    <location>
        <begin position="65"/>
        <end position="73"/>
    </location>
</feature>
<feature type="strand" evidence="5">
    <location>
        <begin position="75"/>
        <end position="77"/>
    </location>
</feature>
<feature type="helix" evidence="4">
    <location>
        <begin position="81"/>
        <end position="94"/>
    </location>
</feature>
<feature type="helix" evidence="4">
    <location>
        <begin position="130"/>
        <end position="134"/>
    </location>
</feature>
<feature type="strand" evidence="4">
    <location>
        <begin position="152"/>
        <end position="160"/>
    </location>
</feature>
<feature type="helix" evidence="4">
    <location>
        <begin position="162"/>
        <end position="173"/>
    </location>
</feature>
<feature type="strand" evidence="4">
    <location>
        <begin position="181"/>
        <end position="189"/>
    </location>
</feature>
<feature type="helix" evidence="4">
    <location>
        <begin position="194"/>
        <end position="199"/>
    </location>
</feature>
<feature type="turn" evidence="4">
    <location>
        <begin position="200"/>
        <end position="204"/>
    </location>
</feature>
<feature type="strand" evidence="4">
    <location>
        <begin position="207"/>
        <end position="212"/>
    </location>
</feature>
<feature type="helix" evidence="4">
    <location>
        <begin position="219"/>
        <end position="229"/>
    </location>
</feature>
<feature type="strand" evidence="4">
    <location>
        <begin position="232"/>
        <end position="238"/>
    </location>
</feature>
<feature type="strand" evidence="4">
    <location>
        <begin position="242"/>
        <end position="244"/>
    </location>
</feature>
<feature type="helix" evidence="4">
    <location>
        <begin position="248"/>
        <end position="258"/>
    </location>
</feature>
<feature type="strand" evidence="4">
    <location>
        <begin position="262"/>
        <end position="265"/>
    </location>
</feature>
<feature type="strand" evidence="4">
    <location>
        <begin position="268"/>
        <end position="271"/>
    </location>
</feature>
<feature type="helix" evidence="5">
    <location>
        <begin position="273"/>
        <end position="275"/>
    </location>
</feature>
<feature type="helix" evidence="4">
    <location>
        <begin position="278"/>
        <end position="283"/>
    </location>
</feature>
<feature type="helix" evidence="4">
    <location>
        <begin position="287"/>
        <end position="289"/>
    </location>
</feature>
<feature type="strand" evidence="4">
    <location>
        <begin position="300"/>
        <end position="302"/>
    </location>
</feature>
<feature type="strand" evidence="5">
    <location>
        <begin position="303"/>
        <end position="307"/>
    </location>
</feature>
<feature type="helix" evidence="4">
    <location>
        <begin position="313"/>
        <end position="319"/>
    </location>
</feature>
<feature type="turn" evidence="4">
    <location>
        <begin position="320"/>
        <end position="325"/>
    </location>
</feature>
<feature type="helix" evidence="4">
    <location>
        <begin position="329"/>
        <end position="332"/>
    </location>
</feature>
<feature type="strand" evidence="4">
    <location>
        <begin position="337"/>
        <end position="341"/>
    </location>
</feature>
<feature type="helix" evidence="4">
    <location>
        <begin position="343"/>
        <end position="348"/>
    </location>
</feature>
<feature type="helix" evidence="4">
    <location>
        <begin position="361"/>
        <end position="371"/>
    </location>
</feature>
<feature type="strand" evidence="4">
    <location>
        <begin position="375"/>
        <end position="378"/>
    </location>
</feature>
<feature type="helix" evidence="4">
    <location>
        <begin position="380"/>
        <end position="382"/>
    </location>
</feature>
<feature type="strand" evidence="4">
    <location>
        <begin position="384"/>
        <end position="387"/>
    </location>
</feature>
<feature type="strand" evidence="4">
    <location>
        <begin position="391"/>
        <end position="393"/>
    </location>
</feature>
<feature type="turn" evidence="4">
    <location>
        <begin position="408"/>
        <end position="412"/>
    </location>
</feature>
<feature type="turn" evidence="4">
    <location>
        <begin position="414"/>
        <end position="417"/>
    </location>
</feature>
<feature type="turn" evidence="4">
    <location>
        <begin position="423"/>
        <end position="425"/>
    </location>
</feature>
<feature type="strand" evidence="4">
    <location>
        <begin position="433"/>
        <end position="442"/>
    </location>
</feature>
<feature type="turn" evidence="4">
    <location>
        <begin position="444"/>
        <end position="446"/>
    </location>
</feature>
<feature type="helix" evidence="4">
    <location>
        <begin position="447"/>
        <end position="455"/>
    </location>
</feature>
<feature type="strand" evidence="4">
    <location>
        <begin position="456"/>
        <end position="458"/>
    </location>
</feature>
<feature type="strand" evidence="4">
    <location>
        <begin position="461"/>
        <end position="470"/>
    </location>
</feature>
<feature type="strand" evidence="4">
    <location>
        <begin position="472"/>
        <end position="474"/>
    </location>
</feature>
<feature type="helix" evidence="4">
    <location>
        <begin position="475"/>
        <end position="483"/>
    </location>
</feature>
<feature type="strand" evidence="4">
    <location>
        <begin position="489"/>
        <end position="494"/>
    </location>
</feature>
<feature type="helix" evidence="4">
    <location>
        <begin position="499"/>
        <end position="509"/>
    </location>
</feature>
<feature type="strand" evidence="4">
    <location>
        <begin position="512"/>
        <end position="517"/>
    </location>
</feature>
<feature type="helix" evidence="4">
    <location>
        <begin position="528"/>
        <end position="538"/>
    </location>
</feature>
<feature type="strand" evidence="4">
    <location>
        <begin position="543"/>
        <end position="552"/>
    </location>
</feature>
<feature type="strand" evidence="4">
    <location>
        <begin position="558"/>
        <end position="561"/>
    </location>
</feature>
<feature type="helix" evidence="4">
    <location>
        <begin position="570"/>
        <end position="573"/>
    </location>
</feature>
<feature type="strand" evidence="4">
    <location>
        <begin position="583"/>
        <end position="586"/>
    </location>
</feature>
<feature type="helix" evidence="4">
    <location>
        <begin position="587"/>
        <end position="590"/>
    </location>
</feature>
<feature type="turn" evidence="4">
    <location>
        <begin position="591"/>
        <end position="594"/>
    </location>
</feature>
<feature type="helix" evidence="4">
    <location>
        <begin position="604"/>
        <end position="612"/>
    </location>
</feature>
<feature type="turn" evidence="4">
    <location>
        <begin position="613"/>
        <end position="615"/>
    </location>
</feature>
<feature type="strand" evidence="4">
    <location>
        <begin position="618"/>
        <end position="629"/>
    </location>
</feature>
<feature type="helix" evidence="4">
    <location>
        <begin position="640"/>
        <end position="654"/>
    </location>
</feature>
<feature type="turn" evidence="4">
    <location>
        <begin position="655"/>
        <end position="659"/>
    </location>
</feature>
<feature type="strand" evidence="4">
    <location>
        <begin position="662"/>
        <end position="668"/>
    </location>
</feature>
<feature type="strand" evidence="4">
    <location>
        <begin position="677"/>
        <end position="681"/>
    </location>
</feature>
<evidence type="ECO:0000269" key="1">
    <source>
    </source>
</evidence>
<evidence type="ECO:0000269" key="2">
    <source>
    </source>
</evidence>
<evidence type="ECO:0000305" key="3"/>
<evidence type="ECO:0007829" key="4">
    <source>
        <dbReference type="PDB" id="2Z86"/>
    </source>
</evidence>
<evidence type="ECO:0007829" key="5">
    <source>
        <dbReference type="PDB" id="2Z87"/>
    </source>
</evidence>
<reference key="1">
    <citation type="journal article" date="2002" name="J. Biol. Chem.">
        <title>Molecular cloning and characterization of chondroitin polymerase from Escherichia coli strain K4.</title>
        <authorList>
            <person name="Ninomiya T."/>
            <person name="Sugiura N."/>
            <person name="Tawada A."/>
            <person name="Sugimoto K."/>
            <person name="Watanabe H."/>
            <person name="Kimata K."/>
        </authorList>
    </citation>
    <scope>NUCLEOTIDE SEQUENCE [GENOMIC DNA]</scope>
    <scope>FUNCTION</scope>
    <scope>CATALYTIC ACTIVITY</scope>
    <scope>COFACTOR</scope>
    <scope>BIOPHYSICOCHEMICAL PROPERTIES</scope>
    <source>
        <strain>O5:K4(L):H4 / ATCC 23502</strain>
    </source>
</reference>
<reference key="2">
    <citation type="journal article" date="2009" name="Biochem. Biophys. Res. Commun.">
        <title>Crystal structure of chondroitin polymerase from Escherichia coli K4.</title>
        <authorList>
            <person name="Osawa T."/>
            <person name="Sugiura N."/>
            <person name="Shimada H."/>
            <person name="Hirooka R."/>
            <person name="Tsuji A."/>
            <person name="Shirakawa T."/>
            <person name="Fukuyama K."/>
            <person name="Kimura M."/>
            <person name="Kimata K."/>
            <person name="Kakuta Y."/>
        </authorList>
    </citation>
    <scope>X-RAY CRYSTALLOGRAPHY (2.4 ANGSTROMS) OF 58-682 IN COMPLEXES WITH UDP; UDP-ALPHA-D-GLUCURONATE AND UDP-N-ACETYL-ALPHA-D-GALACTOSAMINE</scope>
    <scope>COFACTOR</scope>
    <scope>SUBSTRATE SPECIFICITY</scope>
    <source>
        <strain>O5:K4(L):H4 / ATCC 23502</strain>
    </source>
</reference>
<comment type="function">
    <text evidence="1">Glycosyltransferase that catalyzes elongation of chondroitin, a polysaccharide composed of a repeating disaccharide of N-acetylgalactosamine (GalNAc) and glucuronic acid (GlcUA) units, by alternatively transferring the GlcUA and GalNAc moiety from UDP-GlcUA and UDP-GalNAc to the non-reducing ends of the chondroitin chain. Each chondroitin unit has the composition beta-(1-&gt;4)-GlcUA-beta-(1-&gt;3)-GalNAc.</text>
</comment>
<comment type="catalytic activity">
    <reaction evidence="1">
        <text>3-O-(beta-D-GlcA-(1-&gt;3)-beta-D-GalNAc-(1-&gt;4)-beta-D-GlcA-(1-&gt;3)-beta-D-Gal-(1-&gt;3)-beta-D-Gal-(1-&gt;4)-beta-D-Xyl)-L-seryl-[protein] + UDP-N-acetyl-alpha-D-galactosamine = 3-O-(beta-D-GalNAc-(1-&gt;4)-beta-D-GlcA-(1-&gt;3)-beta-D-GalNAc-(1-&gt;4)-beta-D-GlcA-(1-&gt;3)-beta-D-Gal-(1-&gt;3)-beta-D-Gal-(1-&gt;4)-beta-D-Xyl)-L-seryl-[protein] + UDP + H(+)</text>
        <dbReference type="Rhea" id="RHEA:20800"/>
        <dbReference type="Rhea" id="RHEA-COMP:14058"/>
        <dbReference type="Rhea" id="RHEA-COMP:14059"/>
        <dbReference type="ChEBI" id="CHEBI:15378"/>
        <dbReference type="ChEBI" id="CHEBI:58223"/>
        <dbReference type="ChEBI" id="CHEBI:67138"/>
        <dbReference type="ChEBI" id="CHEBI:138442"/>
        <dbReference type="ChEBI" id="CHEBI:138443"/>
        <dbReference type="EC" id="2.4.1.175"/>
    </reaction>
</comment>
<comment type="catalytic activity">
    <reaction evidence="1">
        <text>3-O-{beta-D-GlcA-(1-&gt;3)-[beta-D-GalNAc-(1-&gt;4)-beta-D-GlcA-(1-&gt;3)](n)-beta-D-GalNAc-(1-&gt;4)-beta-D-GlcA-(1-&gt;3)-beta-D-Gal-(1-&gt;3)-beta-D-Gal-(1-&gt;4)-beta-D-Xyl}-L-seryl-[protein] + UDP-N-acetyl-alpha-D-galactosamine = 3-O-{[beta-D-GalNAc-(1-&gt;4)-beta-D-GlcA-(1-&gt;3)](n+1)-beta-D-GalNAc-(1-&gt;4)-beta-D-GlcA-(1-&gt;3)-beta-D-Gal-(1-&gt;3)-beta-D-Gal-(1-&gt;4)-beta-D-Xyl}-L-seryl-[protein] + UDP + H(+)</text>
        <dbReference type="Rhea" id="RHEA:55000"/>
        <dbReference type="Rhea" id="RHEA-COMP:14060"/>
        <dbReference type="Rhea" id="RHEA-COMP:14301"/>
        <dbReference type="ChEBI" id="CHEBI:15378"/>
        <dbReference type="ChEBI" id="CHEBI:58223"/>
        <dbReference type="ChEBI" id="CHEBI:67138"/>
        <dbReference type="ChEBI" id="CHEBI:138444"/>
        <dbReference type="ChEBI" id="CHEBI:138445"/>
        <dbReference type="EC" id="2.4.1.175"/>
    </reaction>
</comment>
<comment type="catalytic activity">
    <reaction evidence="1">
        <text>3-O-(beta-D-GalNAc-(1-&gt;4)-beta-D-GlcA-(1-&gt;3)-beta-D-Gal-(1-&gt;3)-beta-D-Gal-(1-&gt;4)-beta-D-Xyl)-L-seryl-[protein] + UDP-alpha-D-glucuronate = 3-O-(beta-D-GlcA-(1-&gt;3)-beta-D-GalNAc-(1-&gt;4)-beta-D-GlcA-(1-&gt;3)-beta-D-Gal-(1-&gt;3)-beta-D-Gal-(1-&gt;4)-beta-D-Xyl)-L-seryl-[protein] + UDP + H(+)</text>
        <dbReference type="Rhea" id="RHEA:23428"/>
        <dbReference type="Rhea" id="RHEA-COMP:12575"/>
        <dbReference type="Rhea" id="RHEA-COMP:14058"/>
        <dbReference type="ChEBI" id="CHEBI:15378"/>
        <dbReference type="ChEBI" id="CHEBI:58052"/>
        <dbReference type="ChEBI" id="CHEBI:58223"/>
        <dbReference type="ChEBI" id="CHEBI:132105"/>
        <dbReference type="ChEBI" id="CHEBI:138442"/>
        <dbReference type="EC" id="2.4.1.226"/>
    </reaction>
</comment>
<comment type="catalytic activity">
    <reaction evidence="1">
        <text>3-O-{[beta-D-GalNAc-(1-&gt;4)-beta-D-GlcA-(1-&gt;3)](n)-beta-D-GalNAc-(1-&gt;4)-beta-D-GlcA-(1-&gt;3)-beta-D-Gal-(1-&gt;3)-beta-D-Gal-(1-&gt;4)-beta-D-Xyl}-L-seryl-[protein] + UDP-alpha-D-glucuronate = 3-O-{beta-D-GlcA-(1-&gt;3)-[beta-D-GalNAc-(1-&gt;4)-beta-D-GlcA-(1-&gt;3)](n)-beta-D-GalNAc-(1-&gt;4)-beta-D-GlcA-(1-&gt;3)-beta-D-Gal-(1-&gt;3)-beta-D-Gal-(1-&gt;4)-beta-D-Xyl}-L-seryl-[protein] + UDP + H(+)</text>
        <dbReference type="Rhea" id="RHEA:54996"/>
        <dbReference type="Rhea" id="RHEA-COMP:14060"/>
        <dbReference type="Rhea" id="RHEA-COMP:14061"/>
        <dbReference type="ChEBI" id="CHEBI:15378"/>
        <dbReference type="ChEBI" id="CHEBI:58052"/>
        <dbReference type="ChEBI" id="CHEBI:58223"/>
        <dbReference type="ChEBI" id="CHEBI:138444"/>
        <dbReference type="ChEBI" id="CHEBI:138445"/>
        <dbReference type="EC" id="2.4.1.226"/>
    </reaction>
</comment>
<comment type="cofactor">
    <cofactor evidence="1 2">
        <name>Mn(2+)</name>
        <dbReference type="ChEBI" id="CHEBI:29035"/>
    </cofactor>
    <text evidence="2">Binds 2 Mn(2+) ions per subunit.</text>
</comment>
<comment type="biophysicochemical properties">
    <kinetics>
        <KM evidence="1">3.44 uM for UDP-GlcUA</KM>
        <KM evidence="1">31.6 uM for UDP-GalNAc</KM>
    </kinetics>
    <phDependence>
        <text evidence="1">Optimum pH is 7-7.5.</text>
    </phDependence>
    <temperatureDependence>
        <text>Optimum temperature is 30 degrees Celsius for highest reaction speed, and 25 degrees Celsius to obtain highest molecular weight of product chondroitin.</text>
    </temperatureDependence>
</comment>
<comment type="similarity">
    <text evidence="3">Belongs to the glycosyltransferase 2 family. CS/HAS subfamily.</text>
</comment>
<protein>
    <recommendedName>
        <fullName>Chondroitin synthase</fullName>
        <shortName>CS</shortName>
    </recommendedName>
    <alternativeName>
        <fullName>Chondroitin polymerase</fullName>
    </alternativeName>
    <domain>
        <recommendedName>
            <fullName>Glucuronosyl-N-acetylgalactosaminyl-proteoglycan 4-beta-N-acetylgalactosaminyltransferase</fullName>
            <ecNumber evidence="1">2.4.1.175</ecNumber>
        </recommendedName>
        <alternativeName>
            <fullName>UDP-GalNAc transferase</fullName>
        </alternativeName>
    </domain>
    <domain>
        <recommendedName>
            <fullName>N-acetylgalactosaminyl-proteoglycan 3-beta-glucuronosyltransferase</fullName>
            <ecNumber evidence="1">2.4.1.226</ecNumber>
        </recommendedName>
        <alternativeName>
            <fullName>UDP-GlcUA transferase</fullName>
        </alternativeName>
    </domain>
</protein>
<name>CHS_ECOLX</name>
<sequence length="686" mass="79257">MSILNQAINLYKNKNYRQALSLFEKVAEIYDVSWVEANIKLCQTALNLSEEVDKLNRKAVIDIDAATKIMCSNAKAISLNEVEKNEIISKYREITAKKSERAELKEVEPIPLDWPSDLTLPPLPESTNDYVWAGKRKELDDYPRKQLIIDGLSIVIPTYNRAKILAITLACLCNQKTIYDYEVIVADDGSKENIEEIVREFESLLNIKYVRQKDYGYQLCAVRNLGLRAAKYNYVAILDCDMAPNPLWVQSYMELLAVDDNVALIGPRKYIDTSKHTYLDFLSQKSLINEIPEIITNNQVAGKVEQNKSVDWRIEHFKNTDNLRLCNTPFRFFSGGNVAFAKKWLFRAGWFDEEFTHWGGEDNEFGYRLYREGCYFRSVEGAMAYHQEPPGKENETDRAAGKNITVQLLQQKVPYFYRKKEKIESATLKRVPLVSIYIPAYNCSKYIVRCVESALNQTITDLEVCICDDGSTDDTLRILQEHYANHPRVRFISQKNKGIGSASNTAVRLCRGFYIGQLDSDDFLEPDAVELCLDEFRKDLSLACVYTTNRNIDREGNLISNGYNWPIYSREKLTSAMICHHFRMFTARAWNLTEGFNESISNAVDYDMYLKLSEVGPFKHINKICYNRVLHGENTSIKKLDIQKENHFKVVNESLSRLGIKKYKYSPLTNLNECRKYTWEKIENDL</sequence>
<proteinExistence type="evidence at protein level"/>
<accession>Q8L0V4</accession>